<organism>
    <name type="scientific">Coxiella burnetii (strain CbuG_Q212)</name>
    <name type="common">Coxiella burnetii (strain Q212)</name>
    <dbReference type="NCBI Taxonomy" id="434923"/>
    <lineage>
        <taxon>Bacteria</taxon>
        <taxon>Pseudomonadati</taxon>
        <taxon>Pseudomonadota</taxon>
        <taxon>Gammaproteobacteria</taxon>
        <taxon>Legionellales</taxon>
        <taxon>Coxiellaceae</taxon>
        <taxon>Coxiella</taxon>
    </lineage>
</organism>
<dbReference type="EMBL" id="CP001019">
    <property type="protein sequence ID" value="ACJ17987.1"/>
    <property type="molecule type" value="Genomic_DNA"/>
</dbReference>
<dbReference type="RefSeq" id="WP_012569825.1">
    <property type="nucleotide sequence ID" value="NC_011527.1"/>
</dbReference>
<dbReference type="SMR" id="B6IZ59"/>
<dbReference type="KEGG" id="cbg:CbuG_0575"/>
<dbReference type="HOGENOM" id="CLU_070525_1_1_6"/>
<dbReference type="GO" id="GO:0005829">
    <property type="term" value="C:cytosol"/>
    <property type="evidence" value="ECO:0007669"/>
    <property type="project" value="TreeGrafter"/>
</dbReference>
<dbReference type="GO" id="GO:0000028">
    <property type="term" value="P:ribosomal small subunit assembly"/>
    <property type="evidence" value="ECO:0007669"/>
    <property type="project" value="TreeGrafter"/>
</dbReference>
<dbReference type="GO" id="GO:0006412">
    <property type="term" value="P:translation"/>
    <property type="evidence" value="ECO:0007669"/>
    <property type="project" value="TreeGrafter"/>
</dbReference>
<dbReference type="CDD" id="cd01734">
    <property type="entry name" value="YlxS_C"/>
    <property type="match status" value="1"/>
</dbReference>
<dbReference type="FunFam" id="3.30.300.70:FF:000001">
    <property type="entry name" value="Ribosome maturation factor RimP"/>
    <property type="match status" value="1"/>
</dbReference>
<dbReference type="Gene3D" id="2.30.30.180">
    <property type="entry name" value="Ribosome maturation factor RimP, C-terminal domain"/>
    <property type="match status" value="1"/>
</dbReference>
<dbReference type="Gene3D" id="3.30.300.70">
    <property type="entry name" value="RimP-like superfamily, N-terminal"/>
    <property type="match status" value="1"/>
</dbReference>
<dbReference type="HAMAP" id="MF_01077">
    <property type="entry name" value="RimP"/>
    <property type="match status" value="1"/>
</dbReference>
<dbReference type="InterPro" id="IPR003728">
    <property type="entry name" value="Ribosome_maturation_RimP"/>
</dbReference>
<dbReference type="InterPro" id="IPR028998">
    <property type="entry name" value="RimP_C"/>
</dbReference>
<dbReference type="InterPro" id="IPR036847">
    <property type="entry name" value="RimP_C_sf"/>
</dbReference>
<dbReference type="InterPro" id="IPR028989">
    <property type="entry name" value="RimP_N"/>
</dbReference>
<dbReference type="InterPro" id="IPR035956">
    <property type="entry name" value="RimP_N_sf"/>
</dbReference>
<dbReference type="NCBIfam" id="NF000927">
    <property type="entry name" value="PRK00092.1-1"/>
    <property type="match status" value="1"/>
</dbReference>
<dbReference type="PANTHER" id="PTHR33867">
    <property type="entry name" value="RIBOSOME MATURATION FACTOR RIMP"/>
    <property type="match status" value="1"/>
</dbReference>
<dbReference type="PANTHER" id="PTHR33867:SF1">
    <property type="entry name" value="RIBOSOME MATURATION FACTOR RIMP"/>
    <property type="match status" value="1"/>
</dbReference>
<dbReference type="Pfam" id="PF17384">
    <property type="entry name" value="DUF150_C"/>
    <property type="match status" value="1"/>
</dbReference>
<dbReference type="Pfam" id="PF02576">
    <property type="entry name" value="RimP_N"/>
    <property type="match status" value="1"/>
</dbReference>
<dbReference type="SUPFAM" id="SSF74942">
    <property type="entry name" value="YhbC-like, C-terminal domain"/>
    <property type="match status" value="1"/>
</dbReference>
<dbReference type="SUPFAM" id="SSF75420">
    <property type="entry name" value="YhbC-like, N-terminal domain"/>
    <property type="match status" value="1"/>
</dbReference>
<protein>
    <recommendedName>
        <fullName evidence="1">Ribosome maturation factor RimP</fullName>
    </recommendedName>
</protein>
<keyword id="KW-0963">Cytoplasm</keyword>
<keyword id="KW-0690">Ribosome biogenesis</keyword>
<proteinExistence type="inferred from homology"/>
<evidence type="ECO:0000255" key="1">
    <source>
        <dbReference type="HAMAP-Rule" id="MF_01077"/>
    </source>
</evidence>
<feature type="chain" id="PRO_1000136753" description="Ribosome maturation factor RimP">
    <location>
        <begin position="1"/>
        <end position="153"/>
    </location>
</feature>
<gene>
    <name evidence="1" type="primary">rimP</name>
    <name type="ordered locus">CbuG_0575</name>
</gene>
<sequence length="153" mass="17149">MSQARTLHRLIAPAVEALGFELVGCELFRRGATTILQVFVDKPGGIGLDECAKVSRQISAVLDVEDPIRGRYTLEVSSPGLERPLYTANHYRRFIGNKAKIRLREPREGQRQFRGMIVAVDNEEQVTLQLDNKILKVSLGEIEKANLITDFEG</sequence>
<reference key="1">
    <citation type="journal article" date="2009" name="Infect. Immun.">
        <title>Comparative genomics reveal extensive transposon-mediated genomic plasticity and diversity among potential effector proteins within the genus Coxiella.</title>
        <authorList>
            <person name="Beare P.A."/>
            <person name="Unsworth N."/>
            <person name="Andoh M."/>
            <person name="Voth D.E."/>
            <person name="Omsland A."/>
            <person name="Gilk S.D."/>
            <person name="Williams K.P."/>
            <person name="Sobral B.W."/>
            <person name="Kupko J.J. III"/>
            <person name="Porcella S.F."/>
            <person name="Samuel J.E."/>
            <person name="Heinzen R.A."/>
        </authorList>
    </citation>
    <scope>NUCLEOTIDE SEQUENCE [LARGE SCALE GENOMIC DNA]</scope>
    <source>
        <strain>CbuG_Q212</strain>
    </source>
</reference>
<name>RIMP_COXB2</name>
<accession>B6IZ59</accession>
<comment type="function">
    <text evidence="1">Required for maturation of 30S ribosomal subunits.</text>
</comment>
<comment type="subcellular location">
    <subcellularLocation>
        <location evidence="1">Cytoplasm</location>
    </subcellularLocation>
</comment>
<comment type="similarity">
    <text evidence="1">Belongs to the RimP family.</text>
</comment>